<accession>E3P6N5</accession>
<evidence type="ECO:0000250" key="1"/>
<evidence type="ECO:0000305" key="2"/>
<evidence type="ECO:0000305" key="3">
    <source>
    </source>
</evidence>
<dbReference type="EMBL" id="FJ411280">
    <property type="protein sequence ID" value="ACR83841.1"/>
    <property type="molecule type" value="mRNA"/>
</dbReference>
<dbReference type="SMR" id="E3P6N5"/>
<dbReference type="MEROPS" id="I25.012"/>
<dbReference type="GO" id="GO:0070062">
    <property type="term" value="C:extracellular exosome"/>
    <property type="evidence" value="ECO:0007669"/>
    <property type="project" value="TreeGrafter"/>
</dbReference>
<dbReference type="GO" id="GO:0004869">
    <property type="term" value="F:cysteine-type endopeptidase inhibitor activity"/>
    <property type="evidence" value="ECO:0007669"/>
    <property type="project" value="UniProtKB-KW"/>
</dbReference>
<dbReference type="CDD" id="cd00042">
    <property type="entry name" value="CY"/>
    <property type="match status" value="1"/>
</dbReference>
<dbReference type="FunFam" id="3.10.450.10:FF:000004">
    <property type="entry name" value="Cystatin C"/>
    <property type="match status" value="1"/>
</dbReference>
<dbReference type="Gene3D" id="3.10.450.10">
    <property type="match status" value="1"/>
</dbReference>
<dbReference type="InterPro" id="IPR000010">
    <property type="entry name" value="Cystatin_dom"/>
</dbReference>
<dbReference type="InterPro" id="IPR046350">
    <property type="entry name" value="Cystatin_sf"/>
</dbReference>
<dbReference type="InterPro" id="IPR018073">
    <property type="entry name" value="Prot_inh_cystat_CS"/>
</dbReference>
<dbReference type="PANTHER" id="PTHR47033">
    <property type="entry name" value="CYSTATIN-M"/>
    <property type="match status" value="1"/>
</dbReference>
<dbReference type="PANTHER" id="PTHR47033:SF1">
    <property type="entry name" value="CYSTATIN-M"/>
    <property type="match status" value="1"/>
</dbReference>
<dbReference type="Pfam" id="PF00031">
    <property type="entry name" value="Cystatin"/>
    <property type="match status" value="1"/>
</dbReference>
<dbReference type="SMART" id="SM00043">
    <property type="entry name" value="CY"/>
    <property type="match status" value="1"/>
</dbReference>
<dbReference type="SUPFAM" id="SSF54403">
    <property type="entry name" value="Cystatin/monellin"/>
    <property type="match status" value="1"/>
</dbReference>
<dbReference type="PROSITE" id="PS00287">
    <property type="entry name" value="CYSTATIN"/>
    <property type="match status" value="1"/>
</dbReference>
<comment type="function">
    <text evidence="1">Inhibits various C1 cysteine proteases including cathepsin L, papain and cathepsin B. This protein has no toxic activity and its function in the venom is unknown. It may play a role as a housekeeping or regulatory protein (By similarity).</text>
</comment>
<comment type="subcellular location">
    <subcellularLocation>
        <location>Secreted</location>
    </subcellularLocation>
</comment>
<comment type="tissue specificity">
    <text evidence="3">Expressed by the venom gland at an extremely low level (at protein level).</text>
</comment>
<comment type="miscellaneous">
    <text evidence="1">Negative results: the recombinant protein does not inhibit calpain-1 (CAPN1), a C2 family cysteine protease and legumain (LGMN), a C13 family cysteine protease. Does not provoke cell death (PC3 prostate cancer cells) (By similarity).</text>
</comment>
<comment type="similarity">
    <text evidence="2">Belongs to the cystatin family.</text>
</comment>
<feature type="signal peptide" evidence="1">
    <location>
        <begin position="1"/>
        <end position="26"/>
    </location>
</feature>
<feature type="chain" id="PRO_5000654413" description="Cystatin">
    <location>
        <begin position="27"/>
        <end position="141"/>
    </location>
</feature>
<feature type="domain" description="Cystatin">
    <location>
        <begin position="29"/>
        <end position="129"/>
    </location>
</feature>
<feature type="short sequence motif" description="Secondary area of contact" evidence="1">
    <location>
        <begin position="73"/>
        <end position="77"/>
    </location>
</feature>
<feature type="site" description="Reactive site" evidence="1">
    <location>
        <position position="29"/>
    </location>
</feature>
<feature type="disulfide bond" evidence="1">
    <location>
        <begin position="91"/>
        <end position="107"/>
    </location>
</feature>
<feature type="disulfide bond" evidence="1">
    <location>
        <begin position="120"/>
        <end position="140"/>
    </location>
</feature>
<reference key="1">
    <citation type="journal article" date="2011" name="Biochimie">
        <title>Cloning and characterisation of novel cystatins from elapid snake venom glands.</title>
        <authorList>
            <person name="Richards R."/>
            <person name="St Pierre L."/>
            <person name="Trabi M."/>
            <person name="Johnson L.A."/>
            <person name="de Jersey J."/>
            <person name="Masci P.P."/>
            <person name="Lavin M.F."/>
        </authorList>
    </citation>
    <scope>NUCLEOTIDE SEQUENCE [MRNA]</scope>
    <scope>LEVEL OF PROTEIN EXPRESSION</scope>
    <source>
        <tissue>Venom</tissue>
        <tissue>Venom gland</tissue>
    </source>
</reference>
<organism>
    <name type="scientific">Oxyuranus microlepidotus</name>
    <name type="common">Inland taipan</name>
    <name type="synonym">Diemenia microlepidota</name>
    <dbReference type="NCBI Taxonomy" id="111177"/>
    <lineage>
        <taxon>Eukaryota</taxon>
        <taxon>Metazoa</taxon>
        <taxon>Chordata</taxon>
        <taxon>Craniata</taxon>
        <taxon>Vertebrata</taxon>
        <taxon>Euteleostomi</taxon>
        <taxon>Lepidosauria</taxon>
        <taxon>Squamata</taxon>
        <taxon>Bifurcata</taxon>
        <taxon>Unidentata</taxon>
        <taxon>Episquamata</taxon>
        <taxon>Toxicofera</taxon>
        <taxon>Serpentes</taxon>
        <taxon>Colubroidea</taxon>
        <taxon>Elapidae</taxon>
        <taxon>Hydrophiinae</taxon>
        <taxon>Oxyuranus</taxon>
    </lineage>
</organism>
<proteinExistence type="evidence at protein level"/>
<name>CYT_OXYMI</name>
<keyword id="KW-1015">Disulfide bond</keyword>
<keyword id="KW-0646">Protease inhibitor</keyword>
<keyword id="KW-0964">Secreted</keyword>
<keyword id="KW-0732">Signal</keyword>
<keyword id="KW-0789">Thiol protease inhibitor</keyword>
<sequence length="141" mass="15881">MVHSQLPVAAPLRLLCALLLLPSATMIPGGISPRSVTDPDVQKAAEFAVQEYNALSTNAYYYKQLRIVEAQSQVVAGAKYYLTMELMKTKCAKTTGKPKVYKEIQNCELPPKAQQEKLTCHFQVWSRPWLEKMELTKMSCN</sequence>
<protein>
    <recommendedName>
        <fullName>Cystatin</fullName>
    </recommendedName>
</protein>